<organism>
    <name type="scientific">Pelagibacter ubique (strain HTCC1062)</name>
    <dbReference type="NCBI Taxonomy" id="335992"/>
    <lineage>
        <taxon>Bacteria</taxon>
        <taxon>Pseudomonadati</taxon>
        <taxon>Pseudomonadota</taxon>
        <taxon>Alphaproteobacteria</taxon>
        <taxon>Candidatus Pelagibacterales</taxon>
        <taxon>Candidatus Pelagibacteraceae</taxon>
        <taxon>Candidatus Pelagibacter</taxon>
    </lineage>
</organism>
<protein>
    <recommendedName>
        <fullName evidence="1">Phosphate acyltransferase</fullName>
        <ecNumber evidence="1">2.3.1.274</ecNumber>
    </recommendedName>
    <alternativeName>
        <fullName evidence="1">Acyl-ACP phosphotransacylase</fullName>
    </alternativeName>
    <alternativeName>
        <fullName evidence="1">Acyl-[acyl-carrier-protein]--phosphate acyltransferase</fullName>
    </alternativeName>
    <alternativeName>
        <fullName evidence="1">Phosphate-acyl-ACP acyltransferase</fullName>
    </alternativeName>
</protein>
<dbReference type="EC" id="2.3.1.274" evidence="1"/>
<dbReference type="EMBL" id="CP000084">
    <property type="protein sequence ID" value="AAZ21842.1"/>
    <property type="molecule type" value="Genomic_DNA"/>
</dbReference>
<dbReference type="RefSeq" id="WP_011282127.1">
    <property type="nucleotide sequence ID" value="NC_007205.1"/>
</dbReference>
<dbReference type="SMR" id="Q4FLU6"/>
<dbReference type="STRING" id="335992.SAR11_1036"/>
<dbReference type="GeneID" id="66295527"/>
<dbReference type="KEGG" id="pub:SAR11_1036"/>
<dbReference type="eggNOG" id="COG0416">
    <property type="taxonomic scope" value="Bacteria"/>
</dbReference>
<dbReference type="HOGENOM" id="CLU_039379_1_0_5"/>
<dbReference type="OrthoDB" id="9806408at2"/>
<dbReference type="UniPathway" id="UPA00085"/>
<dbReference type="Proteomes" id="UP000002528">
    <property type="component" value="Chromosome"/>
</dbReference>
<dbReference type="GO" id="GO:0005737">
    <property type="term" value="C:cytoplasm"/>
    <property type="evidence" value="ECO:0007669"/>
    <property type="project" value="UniProtKB-SubCell"/>
</dbReference>
<dbReference type="GO" id="GO:0043811">
    <property type="term" value="F:phosphate:acyl-[acyl carrier protein] acyltransferase activity"/>
    <property type="evidence" value="ECO:0007669"/>
    <property type="project" value="UniProtKB-UniRule"/>
</dbReference>
<dbReference type="GO" id="GO:0006633">
    <property type="term" value="P:fatty acid biosynthetic process"/>
    <property type="evidence" value="ECO:0007669"/>
    <property type="project" value="UniProtKB-UniRule"/>
</dbReference>
<dbReference type="GO" id="GO:0008654">
    <property type="term" value="P:phospholipid biosynthetic process"/>
    <property type="evidence" value="ECO:0007669"/>
    <property type="project" value="UniProtKB-KW"/>
</dbReference>
<dbReference type="Gene3D" id="3.40.718.10">
    <property type="entry name" value="Isopropylmalate Dehydrogenase"/>
    <property type="match status" value="1"/>
</dbReference>
<dbReference type="HAMAP" id="MF_00019">
    <property type="entry name" value="PlsX"/>
    <property type="match status" value="1"/>
</dbReference>
<dbReference type="InterPro" id="IPR003664">
    <property type="entry name" value="FA_synthesis"/>
</dbReference>
<dbReference type="InterPro" id="IPR012281">
    <property type="entry name" value="Phospholipid_synth_PlsX-like"/>
</dbReference>
<dbReference type="NCBIfam" id="TIGR00182">
    <property type="entry name" value="plsX"/>
    <property type="match status" value="1"/>
</dbReference>
<dbReference type="PANTHER" id="PTHR30100">
    <property type="entry name" value="FATTY ACID/PHOSPHOLIPID SYNTHESIS PROTEIN PLSX"/>
    <property type="match status" value="1"/>
</dbReference>
<dbReference type="PANTHER" id="PTHR30100:SF1">
    <property type="entry name" value="PHOSPHATE ACYLTRANSFERASE"/>
    <property type="match status" value="1"/>
</dbReference>
<dbReference type="Pfam" id="PF02504">
    <property type="entry name" value="FA_synthesis"/>
    <property type="match status" value="1"/>
</dbReference>
<dbReference type="PIRSF" id="PIRSF002465">
    <property type="entry name" value="Phsphlp_syn_PlsX"/>
    <property type="match status" value="1"/>
</dbReference>
<dbReference type="SUPFAM" id="SSF53659">
    <property type="entry name" value="Isocitrate/Isopropylmalate dehydrogenase-like"/>
    <property type="match status" value="1"/>
</dbReference>
<comment type="function">
    <text evidence="1">Catalyzes the reversible formation of acyl-phosphate (acyl-PO(4)) from acyl-[acyl-carrier-protein] (acyl-ACP). This enzyme utilizes acyl-ACP as fatty acyl donor, but not acyl-CoA.</text>
</comment>
<comment type="catalytic activity">
    <reaction evidence="1">
        <text>a fatty acyl-[ACP] + phosphate = an acyl phosphate + holo-[ACP]</text>
        <dbReference type="Rhea" id="RHEA:42292"/>
        <dbReference type="Rhea" id="RHEA-COMP:9685"/>
        <dbReference type="Rhea" id="RHEA-COMP:14125"/>
        <dbReference type="ChEBI" id="CHEBI:43474"/>
        <dbReference type="ChEBI" id="CHEBI:59918"/>
        <dbReference type="ChEBI" id="CHEBI:64479"/>
        <dbReference type="ChEBI" id="CHEBI:138651"/>
        <dbReference type="EC" id="2.3.1.274"/>
    </reaction>
</comment>
<comment type="pathway">
    <text evidence="1">Lipid metabolism; phospholipid metabolism.</text>
</comment>
<comment type="subunit">
    <text evidence="1">Homodimer. Probably interacts with PlsY.</text>
</comment>
<comment type="subcellular location">
    <subcellularLocation>
        <location evidence="1">Cytoplasm</location>
    </subcellularLocation>
    <text evidence="1">Associated with the membrane possibly through PlsY.</text>
</comment>
<comment type="similarity">
    <text evidence="1">Belongs to the PlsX family.</text>
</comment>
<reference key="1">
    <citation type="journal article" date="2005" name="Science">
        <title>Genome streamlining in a cosmopolitan oceanic bacterium.</title>
        <authorList>
            <person name="Giovannoni S.J."/>
            <person name="Tripp H.J."/>
            <person name="Givan S."/>
            <person name="Podar M."/>
            <person name="Vergin K.L."/>
            <person name="Baptista D."/>
            <person name="Bibbs L."/>
            <person name="Eads J."/>
            <person name="Richardson T.H."/>
            <person name="Noordewier M."/>
            <person name="Rappe M.S."/>
            <person name="Short J.M."/>
            <person name="Carrington J.C."/>
            <person name="Mathur E.J."/>
        </authorList>
    </citation>
    <scope>NUCLEOTIDE SEQUENCE [LARGE SCALE GENOMIC DNA]</scope>
    <source>
        <strain>HTCC1062</strain>
    </source>
</reference>
<feature type="chain" id="PRO_0000329248" description="Phosphate acyltransferase">
    <location>
        <begin position="1"/>
        <end position="333"/>
    </location>
</feature>
<name>PLSX_PELUB</name>
<proteinExistence type="inferred from homology"/>
<evidence type="ECO:0000255" key="1">
    <source>
        <dbReference type="HAMAP-Rule" id="MF_00019"/>
    </source>
</evidence>
<keyword id="KW-0963">Cytoplasm</keyword>
<keyword id="KW-0444">Lipid biosynthesis</keyword>
<keyword id="KW-0443">Lipid metabolism</keyword>
<keyword id="KW-0594">Phospholipid biosynthesis</keyword>
<keyword id="KW-1208">Phospholipid metabolism</keyword>
<keyword id="KW-1185">Reference proteome</keyword>
<keyword id="KW-0808">Transferase</keyword>
<sequence>MSKIIKIAVDAMGGDNSPKKIIDGINHHYKSNTNTFYQIFGDKEKIQNYINQLPTSSFEIIHTKDLVKGTDSPLEGAKRGKNTSMWLAIQSVKEKKSDIVISAGNTGALLVISKLNLKMIENIDKPALSALWPNKKNMSVVLDLGANIECSPKNLIDFSIMGSSLFKSLYPDDTAKVALLNIGSEEIKGNETIKETYQQLNQRNNTDFEFKGYIEGNQLMNGDVNVIVADGFTGNIALKTAEGTANFITSELKKAMTGNIVGKISSLLNISNLKKFKERLDPRLYNGAIFIGLDSPVIKSHGGTDYIGFSNSLSVCTRIVTGNLIEKIRNNIC</sequence>
<gene>
    <name evidence="1" type="primary">plsX</name>
    <name type="ordered locus">SAR11_1036</name>
</gene>
<accession>Q4FLU6</accession>